<sequence length="164" mass="18115">MGEVRVVGIRVEQPQNQPVLLLREANGDRYLPIWIGQSEAAAIALEQQGVEPPRPLTHDLIRDLIAALGHSLKEVRIVDLQEGTFYADLIFDRNIKVSARPSDSVAIALRVGVPIYVEEAVLAQAGLLIPDESDEEATTAVREDEVEKFKEFLDSVSPDDFKAT</sequence>
<dbReference type="EMBL" id="AL123456">
    <property type="protein sequence ID" value="CCP44595.1"/>
    <property type="molecule type" value="Genomic_DNA"/>
</dbReference>
<dbReference type="PIR" id="F70721">
    <property type="entry name" value="F70721"/>
</dbReference>
<dbReference type="RefSeq" id="NP_216345.1">
    <property type="nucleotide sequence ID" value="NC_000962.3"/>
</dbReference>
<dbReference type="RefSeq" id="WP_003409242.1">
    <property type="nucleotide sequence ID" value="NZ_NVQJ01000013.1"/>
</dbReference>
<dbReference type="SMR" id="P9WLR5"/>
<dbReference type="STRING" id="83332.Rv1829"/>
<dbReference type="PaxDb" id="83332-Rv1829"/>
<dbReference type="DNASU" id="885743"/>
<dbReference type="GeneID" id="885743"/>
<dbReference type="KEGG" id="mtu:Rv1829"/>
<dbReference type="KEGG" id="mtv:RVBD_1829"/>
<dbReference type="TubercuList" id="Rv1829"/>
<dbReference type="eggNOG" id="COG1259">
    <property type="taxonomic scope" value="Bacteria"/>
</dbReference>
<dbReference type="InParanoid" id="P9WLR5"/>
<dbReference type="OrthoDB" id="9788698at2"/>
<dbReference type="PhylomeDB" id="P9WLR5"/>
<dbReference type="Proteomes" id="UP000001584">
    <property type="component" value="Chromosome"/>
</dbReference>
<dbReference type="GO" id="GO:0009274">
    <property type="term" value="C:peptidoglycan-based cell wall"/>
    <property type="evidence" value="ECO:0007005"/>
    <property type="project" value="MTBBASE"/>
</dbReference>
<dbReference type="GO" id="GO:0005886">
    <property type="term" value="C:plasma membrane"/>
    <property type="evidence" value="ECO:0007005"/>
    <property type="project" value="MTBBASE"/>
</dbReference>
<dbReference type="GO" id="GO:0004518">
    <property type="term" value="F:nuclease activity"/>
    <property type="evidence" value="ECO:0007669"/>
    <property type="project" value="InterPro"/>
</dbReference>
<dbReference type="FunFam" id="3.10.690.10:FF:000001">
    <property type="entry name" value="Bifunctional nuclease family protein"/>
    <property type="match status" value="1"/>
</dbReference>
<dbReference type="Gene3D" id="3.10.690.10">
    <property type="entry name" value="Bifunctional nuclease domain"/>
    <property type="match status" value="1"/>
</dbReference>
<dbReference type="InterPro" id="IPR036104">
    <property type="entry name" value="BFN_sf"/>
</dbReference>
<dbReference type="InterPro" id="IPR003729">
    <property type="entry name" value="Bi_nuclease_dom"/>
</dbReference>
<dbReference type="PANTHER" id="PTHR15160:SF1">
    <property type="entry name" value="VON HIPPEL-LINDAU DISEASE TUMOR SUPPRESSOR"/>
    <property type="match status" value="1"/>
</dbReference>
<dbReference type="PANTHER" id="PTHR15160">
    <property type="entry name" value="VON HIPPEL-LINDAU PROTEIN"/>
    <property type="match status" value="1"/>
</dbReference>
<dbReference type="Pfam" id="PF02577">
    <property type="entry name" value="BFN_dom"/>
    <property type="match status" value="1"/>
</dbReference>
<dbReference type="SUPFAM" id="SSF103256">
    <property type="entry name" value="Hypothetical protein TM0160"/>
    <property type="match status" value="1"/>
</dbReference>
<dbReference type="PROSITE" id="PS51658">
    <property type="entry name" value="BFN"/>
    <property type="match status" value="1"/>
</dbReference>
<protein>
    <recommendedName>
        <fullName>Uncharacterized protein Rv1829</fullName>
    </recommendedName>
</protein>
<name>Y1829_MYCTU</name>
<proteinExistence type="evidence at protein level"/>
<feature type="chain" id="PRO_0000103904" description="Uncharacterized protein Rv1829">
    <location>
        <begin position="1"/>
        <end position="164"/>
    </location>
</feature>
<feature type="domain" description="BFN">
    <location>
        <begin position="1"/>
        <end position="129"/>
    </location>
</feature>
<reference key="1">
    <citation type="journal article" date="1998" name="Nature">
        <title>Deciphering the biology of Mycobacterium tuberculosis from the complete genome sequence.</title>
        <authorList>
            <person name="Cole S.T."/>
            <person name="Brosch R."/>
            <person name="Parkhill J."/>
            <person name="Garnier T."/>
            <person name="Churcher C.M."/>
            <person name="Harris D.E."/>
            <person name="Gordon S.V."/>
            <person name="Eiglmeier K."/>
            <person name="Gas S."/>
            <person name="Barry C.E. III"/>
            <person name="Tekaia F."/>
            <person name="Badcock K."/>
            <person name="Basham D."/>
            <person name="Brown D."/>
            <person name="Chillingworth T."/>
            <person name="Connor R."/>
            <person name="Davies R.M."/>
            <person name="Devlin K."/>
            <person name="Feltwell T."/>
            <person name="Gentles S."/>
            <person name="Hamlin N."/>
            <person name="Holroyd S."/>
            <person name="Hornsby T."/>
            <person name="Jagels K."/>
            <person name="Krogh A."/>
            <person name="McLean J."/>
            <person name="Moule S."/>
            <person name="Murphy L.D."/>
            <person name="Oliver S."/>
            <person name="Osborne J."/>
            <person name="Quail M.A."/>
            <person name="Rajandream M.A."/>
            <person name="Rogers J."/>
            <person name="Rutter S."/>
            <person name="Seeger K."/>
            <person name="Skelton S."/>
            <person name="Squares S."/>
            <person name="Squares R."/>
            <person name="Sulston J.E."/>
            <person name="Taylor K."/>
            <person name="Whitehead S."/>
            <person name="Barrell B.G."/>
        </authorList>
    </citation>
    <scope>NUCLEOTIDE SEQUENCE [LARGE SCALE GENOMIC DNA]</scope>
    <source>
        <strain>ATCC 25618 / H37Rv</strain>
    </source>
</reference>
<reference key="2">
    <citation type="journal article" date="2011" name="Mol. Cell. Proteomics">
        <title>Proteogenomic analysis of Mycobacterium tuberculosis by high resolution mass spectrometry.</title>
        <authorList>
            <person name="Kelkar D.S."/>
            <person name="Kumar D."/>
            <person name="Kumar P."/>
            <person name="Balakrishnan L."/>
            <person name="Muthusamy B."/>
            <person name="Yadav A.K."/>
            <person name="Shrivastava P."/>
            <person name="Marimuthu A."/>
            <person name="Anand S."/>
            <person name="Sundaram H."/>
            <person name="Kingsbury R."/>
            <person name="Harsha H.C."/>
            <person name="Nair B."/>
            <person name="Prasad T.S."/>
            <person name="Chauhan D.S."/>
            <person name="Katoch K."/>
            <person name="Katoch V.M."/>
            <person name="Kumar P."/>
            <person name="Chaerkady R."/>
            <person name="Ramachandran S."/>
            <person name="Dash D."/>
            <person name="Pandey A."/>
        </authorList>
    </citation>
    <scope>IDENTIFICATION BY MASS SPECTROMETRY [LARGE SCALE ANALYSIS]</scope>
    <source>
        <strain>ATCC 25618 / H37Rv</strain>
    </source>
</reference>
<keyword id="KW-1185">Reference proteome</keyword>
<organism>
    <name type="scientific">Mycobacterium tuberculosis (strain ATCC 25618 / H37Rv)</name>
    <dbReference type="NCBI Taxonomy" id="83332"/>
    <lineage>
        <taxon>Bacteria</taxon>
        <taxon>Bacillati</taxon>
        <taxon>Actinomycetota</taxon>
        <taxon>Actinomycetes</taxon>
        <taxon>Mycobacteriales</taxon>
        <taxon>Mycobacteriaceae</taxon>
        <taxon>Mycobacterium</taxon>
        <taxon>Mycobacterium tuberculosis complex</taxon>
    </lineage>
</organism>
<accession>P9WLR5</accession>
<accession>L0TAI6</accession>
<accession>Q50604</accession>
<gene>
    <name type="ordered locus">Rv1829</name>
    <name type="ORF">MTCY1A11.14c</name>
</gene>